<evidence type="ECO:0000250" key="1">
    <source>
        <dbReference type="UniProtKB" id="P45568"/>
    </source>
</evidence>
<evidence type="ECO:0000250" key="2">
    <source>
        <dbReference type="UniProtKB" id="Q9XFS9"/>
    </source>
</evidence>
<evidence type="ECO:0000269" key="3">
    <source>
    </source>
</evidence>
<evidence type="ECO:0000303" key="4">
    <source>
    </source>
</evidence>
<evidence type="ECO:0000305" key="5"/>
<evidence type="ECO:0000312" key="6">
    <source>
        <dbReference type="EMBL" id="AQY77498.1"/>
    </source>
</evidence>
<proteinExistence type="evidence at transcript level"/>
<dbReference type="EC" id="1.1.1.267" evidence="1"/>
<dbReference type="EMBL" id="KY621335">
    <property type="protein sequence ID" value="AQY77498.1"/>
    <property type="molecule type" value="mRNA"/>
</dbReference>
<dbReference type="SMR" id="A0A1U9X9N3"/>
<dbReference type="UniPathway" id="UPA00056">
    <property type="reaction ID" value="UER00092"/>
</dbReference>
<dbReference type="GO" id="GO:0009570">
    <property type="term" value="C:chloroplast stroma"/>
    <property type="evidence" value="ECO:0007669"/>
    <property type="project" value="UniProtKB-SubCell"/>
</dbReference>
<dbReference type="GO" id="GO:0030604">
    <property type="term" value="F:1-deoxy-D-xylulose-5-phosphate reductoisomerase activity"/>
    <property type="evidence" value="ECO:0007669"/>
    <property type="project" value="UniProtKB-EC"/>
</dbReference>
<dbReference type="GO" id="GO:0016853">
    <property type="term" value="F:isomerase activity"/>
    <property type="evidence" value="ECO:0007669"/>
    <property type="project" value="UniProtKB-KW"/>
</dbReference>
<dbReference type="GO" id="GO:0030145">
    <property type="term" value="F:manganese ion binding"/>
    <property type="evidence" value="ECO:0007669"/>
    <property type="project" value="TreeGrafter"/>
</dbReference>
<dbReference type="GO" id="GO:0070402">
    <property type="term" value="F:NADPH binding"/>
    <property type="evidence" value="ECO:0007669"/>
    <property type="project" value="TreeGrafter"/>
</dbReference>
<dbReference type="GO" id="GO:0051484">
    <property type="term" value="P:isopentenyl diphosphate biosynthetic process, methylerythritol 4-phosphate pathway involved in terpenoid biosynthetic process"/>
    <property type="evidence" value="ECO:0007669"/>
    <property type="project" value="TreeGrafter"/>
</dbReference>
<dbReference type="GO" id="GO:0009753">
    <property type="term" value="P:response to jasmonic acid"/>
    <property type="evidence" value="ECO:0000270"/>
    <property type="project" value="UniProtKB"/>
</dbReference>
<dbReference type="GO" id="GO:0009751">
    <property type="term" value="P:response to salicylic acid"/>
    <property type="evidence" value="ECO:0000270"/>
    <property type="project" value="UniProtKB"/>
</dbReference>
<dbReference type="GO" id="GO:0010225">
    <property type="term" value="P:response to UV-C"/>
    <property type="evidence" value="ECO:0000270"/>
    <property type="project" value="UniProtKB"/>
</dbReference>
<dbReference type="Gene3D" id="1.10.1740.10">
    <property type="match status" value="1"/>
</dbReference>
<dbReference type="InterPro" id="IPR003821">
    <property type="entry name" value="DXP_reductoisomerase"/>
</dbReference>
<dbReference type="InterPro" id="IPR013644">
    <property type="entry name" value="DXP_reductoisomerase_C"/>
</dbReference>
<dbReference type="InterPro" id="IPR026877">
    <property type="entry name" value="DXPR_C"/>
</dbReference>
<dbReference type="InterPro" id="IPR036169">
    <property type="entry name" value="DXPR_C_sf"/>
</dbReference>
<dbReference type="NCBIfam" id="TIGR00243">
    <property type="entry name" value="Dxr"/>
    <property type="match status" value="1"/>
</dbReference>
<dbReference type="PANTHER" id="PTHR30525">
    <property type="entry name" value="1-DEOXY-D-XYLULOSE 5-PHOSPHATE REDUCTOISOMERASE"/>
    <property type="match status" value="1"/>
</dbReference>
<dbReference type="PANTHER" id="PTHR30525:SF0">
    <property type="entry name" value="1-DEOXY-D-XYLULOSE 5-PHOSPHATE REDUCTOISOMERASE, CHLOROPLASTIC"/>
    <property type="match status" value="1"/>
</dbReference>
<dbReference type="Pfam" id="PF08436">
    <property type="entry name" value="DXP_redisom_C"/>
    <property type="match status" value="1"/>
</dbReference>
<dbReference type="Pfam" id="PF13288">
    <property type="entry name" value="DXPR_C"/>
    <property type="match status" value="1"/>
</dbReference>
<dbReference type="SUPFAM" id="SSF69055">
    <property type="entry name" value="1-deoxy-D-xylulose-5-phosphate reductoisomerase, C-terminal domain"/>
    <property type="match status" value="1"/>
</dbReference>
<dbReference type="SUPFAM" id="SSF55347">
    <property type="entry name" value="Glyceraldehyde-3-phosphate dehydrogenase-like, C-terminal domain"/>
    <property type="match status" value="1"/>
</dbReference>
<reference key="1">
    <citation type="journal article" date="2017" name="Plant Physiol. Biochem.">
        <title>Tissue-specific gene-expression patterns of genes associated with thymol/carvacrol biosynthesis in thyme (Thymus vulgaris L.) and their differential changes upon treatment with abiotic elicitors.</title>
        <authorList>
            <person name="Majdi M."/>
            <person name="Malekzadeh-Mashhady A."/>
            <person name="Maroufi A."/>
            <person name="Crocoll C."/>
        </authorList>
    </citation>
    <scope>NUCLEOTIDE SEQUENCE [MRNA]</scope>
    <scope>TISSUE SPECIFICITY</scope>
    <scope>INDUCTION BY JASMONIC ACID; SALICYLIC ACID AND UV-C</scope>
</reference>
<sequence length="211" mass="23535">PLAKKHNVKILPADSEHSAIFQCIQGLPEGALRRIILTASGGAFRDLPVEKLKEVKVADALKHPNWNMGKKITVDSATLFNKGLEVIEAHYLFGAEYDDIEIVIHPQSIIHSMVETQDSSVLAQLGWPDMRLPILYTLSWPERVYCSEITWPRLDLCNVDLTFKKPDHVKYPSMDLAYAAGRAGGTMTGVLSAANEKAVEMFIDEKISYLD</sequence>
<name>DXR_THYVU</name>
<gene>
    <name evidence="4" type="primary">DXR</name>
</gene>
<feature type="chain" id="PRO_0000453304" description="1-deoxy-D-xylulose 5-phosphate reductoisomerase">
    <location>
        <begin position="1" status="less than"/>
        <end position="211" status="greater than"/>
    </location>
</feature>
<feature type="binding site" evidence="1">
    <location>
        <position position="14"/>
    </location>
    <ligand>
        <name>Mn(2+)</name>
        <dbReference type="ChEBI" id="CHEBI:29035"/>
    </ligand>
</feature>
<feature type="binding site" evidence="1">
    <location>
        <position position="15"/>
    </location>
    <ligand>
        <name>1-deoxy-D-xylulose 5-phosphate</name>
        <dbReference type="ChEBI" id="CHEBI:57792"/>
    </ligand>
</feature>
<feature type="binding site" evidence="1">
    <location>
        <position position="16"/>
    </location>
    <ligand>
        <name>1-deoxy-D-xylulose 5-phosphate</name>
        <dbReference type="ChEBI" id="CHEBI:57792"/>
    </ligand>
</feature>
<feature type="binding site" evidence="1">
    <location>
        <position position="16"/>
    </location>
    <ligand>
        <name>Mn(2+)</name>
        <dbReference type="ChEBI" id="CHEBI:29035"/>
    </ligand>
</feature>
<feature type="binding site" evidence="1">
    <location>
        <position position="40"/>
    </location>
    <ligand>
        <name>1-deoxy-D-xylulose 5-phosphate</name>
        <dbReference type="ChEBI" id="CHEBI:57792"/>
    </ligand>
</feature>
<feature type="binding site" evidence="1">
    <location>
        <position position="63"/>
    </location>
    <ligand>
        <name>1-deoxy-D-xylulose 5-phosphate</name>
        <dbReference type="ChEBI" id="CHEBI:57792"/>
    </ligand>
</feature>
<feature type="binding site" evidence="1">
    <location>
        <position position="76"/>
    </location>
    <ligand>
        <name>1-deoxy-D-xylulose 5-phosphate</name>
        <dbReference type="ChEBI" id="CHEBI:57792"/>
    </ligand>
</feature>
<feature type="binding site" evidence="1">
    <location>
        <position position="81"/>
    </location>
    <ligand>
        <name>1-deoxy-D-xylulose 5-phosphate</name>
        <dbReference type="ChEBI" id="CHEBI:57792"/>
    </ligand>
</feature>
<feature type="binding site" evidence="1">
    <location>
        <position position="82"/>
    </location>
    <ligand>
        <name>1-deoxy-D-xylulose 5-phosphate</name>
        <dbReference type="ChEBI" id="CHEBI:57792"/>
    </ligand>
</feature>
<feature type="binding site" evidence="1">
    <location>
        <position position="85"/>
    </location>
    <ligand>
        <name>1-deoxy-D-xylulose 5-phosphate</name>
        <dbReference type="ChEBI" id="CHEBI:57792"/>
    </ligand>
</feature>
<feature type="binding site" evidence="1">
    <location>
        <position position="85"/>
    </location>
    <ligand>
        <name>Mn(2+)</name>
        <dbReference type="ChEBI" id="CHEBI:29035"/>
    </ligand>
</feature>
<feature type="non-terminal residue" evidence="6">
    <location>
        <position position="1"/>
    </location>
</feature>
<feature type="non-terminal residue" evidence="6">
    <location>
        <position position="211"/>
    </location>
</feature>
<organism>
    <name type="scientific">Thymus vulgaris</name>
    <name type="common">Thyme</name>
    <dbReference type="NCBI Taxonomy" id="49992"/>
    <lineage>
        <taxon>Eukaryota</taxon>
        <taxon>Viridiplantae</taxon>
        <taxon>Streptophyta</taxon>
        <taxon>Embryophyta</taxon>
        <taxon>Tracheophyta</taxon>
        <taxon>Spermatophyta</taxon>
        <taxon>Magnoliopsida</taxon>
        <taxon>eudicotyledons</taxon>
        <taxon>Gunneridae</taxon>
        <taxon>Pentapetalae</taxon>
        <taxon>asterids</taxon>
        <taxon>lamiids</taxon>
        <taxon>Lamiales</taxon>
        <taxon>Lamiaceae</taxon>
        <taxon>Nepetoideae</taxon>
        <taxon>Mentheae</taxon>
        <taxon>Thymus</taxon>
    </lineage>
</organism>
<keyword id="KW-0150">Chloroplast</keyword>
<keyword id="KW-0413">Isomerase</keyword>
<keyword id="KW-0479">Metal-binding</keyword>
<keyword id="KW-0560">Oxidoreductase</keyword>
<keyword id="KW-0934">Plastid</keyword>
<protein>
    <recommendedName>
        <fullName evidence="4">1-deoxy-D-xylulose 5-phosphate reductoisomerase</fullName>
        <ecNumber evidence="1">1.1.1.267</ecNumber>
    </recommendedName>
</protein>
<comment type="function">
    <text evidence="2">Enzyme of the plastid non-mevalonate pathway for isoprenoid biosynthesis that catalyzes the NADPH-dependent rearrangement and reduction of 1-deoxy-D-xylulose-5-phosphate (DXP) to 2-C-methyl-D-erythritol 4-phosphate (MEP). Required for chloroplast development.</text>
</comment>
<comment type="catalytic activity">
    <reaction evidence="1">
        <text>2-C-methyl-D-erythritol 4-phosphate + NADP(+) = 1-deoxy-D-xylulose 5-phosphate + NADPH + H(+)</text>
        <dbReference type="Rhea" id="RHEA:13717"/>
        <dbReference type="ChEBI" id="CHEBI:15378"/>
        <dbReference type="ChEBI" id="CHEBI:57783"/>
        <dbReference type="ChEBI" id="CHEBI:57792"/>
        <dbReference type="ChEBI" id="CHEBI:58262"/>
        <dbReference type="ChEBI" id="CHEBI:58349"/>
        <dbReference type="EC" id="1.1.1.267"/>
    </reaction>
    <physiologicalReaction direction="right-to-left" evidence="1">
        <dbReference type="Rhea" id="RHEA:13719"/>
    </physiologicalReaction>
</comment>
<comment type="cofactor">
    <cofactor evidence="1">
        <name>Mn(2+)</name>
        <dbReference type="ChEBI" id="CHEBI:29035"/>
    </cofactor>
    <cofactor evidence="1">
        <name>Mg(2+)</name>
        <dbReference type="ChEBI" id="CHEBI:18420"/>
    </cofactor>
</comment>
<comment type="pathway">
    <text evidence="5">Isoprenoid biosynthesis; isopentenyl diphosphate biosynthesis via DXP pathway; isopentenyl diphosphate from 1-deoxy-D-xylulose 5-phosphate: step 1/6.</text>
</comment>
<comment type="subcellular location">
    <subcellularLocation>
        <location evidence="2">Plastid</location>
        <location evidence="2">Chloroplast stroma</location>
    </subcellularLocation>
</comment>
<comment type="tissue specificity">
    <text evidence="3">Mostly expressed in flowers and, to a lower extent, in leaves.</text>
</comment>
<comment type="induction">
    <text evidence="3">Induced by jasmonic acid (MeJA), salicylic acid (SA) and UV-C irradiation.</text>
</comment>
<comment type="similarity">
    <text evidence="5">Belongs to the DXR family.</text>
</comment>
<accession>A0A1U9X9N3</accession>